<protein>
    <recommendedName>
        <fullName>HssA/B-like protein 11</fullName>
    </recommendedName>
</protein>
<dbReference type="EMBL" id="AAFI02000006">
    <property type="protein sequence ID" value="EAL71547.1"/>
    <property type="molecule type" value="Genomic_DNA"/>
</dbReference>
<dbReference type="RefSeq" id="XP_645501.1">
    <property type="nucleotide sequence ID" value="XM_640409.1"/>
</dbReference>
<dbReference type="FunCoup" id="Q75JC7">
    <property type="interactions" value="243"/>
</dbReference>
<dbReference type="PaxDb" id="44689-DDB0233633"/>
<dbReference type="EnsemblProtists" id="EAL71547">
    <property type="protein sequence ID" value="EAL71547"/>
    <property type="gene ID" value="DDB_G0271714"/>
</dbReference>
<dbReference type="GeneID" id="8618130"/>
<dbReference type="KEGG" id="ddi:DDB_G0271714"/>
<dbReference type="dictyBase" id="DDB_G0271714">
    <property type="gene designation" value="sigN12"/>
</dbReference>
<dbReference type="eggNOG" id="ENOG502RIQ1">
    <property type="taxonomic scope" value="Eukaryota"/>
</dbReference>
<dbReference type="HOGENOM" id="CLU_190274_0_0_1"/>
<dbReference type="InParanoid" id="Q75JC7"/>
<dbReference type="OMA" id="NNGTVPH"/>
<dbReference type="PRO" id="PR:Q75JC7"/>
<dbReference type="Proteomes" id="UP000002195">
    <property type="component" value="Chromosome 2"/>
</dbReference>
<dbReference type="GO" id="GO:0030587">
    <property type="term" value="P:sorocarp development"/>
    <property type="evidence" value="ECO:0000318"/>
    <property type="project" value="GO_Central"/>
</dbReference>
<dbReference type="InterPro" id="IPR008455">
    <property type="entry name" value="HssA/B-related"/>
</dbReference>
<dbReference type="PANTHER" id="PTHR31857">
    <property type="entry name" value="HSSA/B-LIKE PROTEIN 17-RELATED"/>
    <property type="match status" value="1"/>
</dbReference>
<dbReference type="PANTHER" id="PTHR31857:SF2">
    <property type="entry name" value="HSSA_B-LIKE PROTEIN 17-RELATED"/>
    <property type="match status" value="1"/>
</dbReference>
<dbReference type="Pfam" id="PF05710">
    <property type="entry name" value="Coiled"/>
    <property type="match status" value="1"/>
</dbReference>
<keyword id="KW-1185">Reference proteome</keyword>
<feature type="chain" id="PRO_0000330381" description="HssA/B-like protein 11">
    <location>
        <begin position="1"/>
        <end position="88"/>
    </location>
</feature>
<comment type="similarity">
    <text evidence="1">Belongs to the hssA/B family.</text>
</comment>
<proteinExistence type="inferred from homology"/>
<gene>
    <name type="primary">hssl11</name>
    <name type="ORF">DDB_G0271714</name>
</gene>
<sequence>MTILASISSIGNVKSISKSNNFSSLSNSSLQSSNSIQCGCGGGSPLIGTVGNLVGGVLVGTGIILGTVVGTVNGVVGGLLSGPNCGCH</sequence>
<accession>Q75JC7</accession>
<accession>Q55AM1</accession>
<reference key="1">
    <citation type="journal article" date="2002" name="Nature">
        <title>Sequence and analysis of chromosome 2 of Dictyostelium discoideum.</title>
        <authorList>
            <person name="Gloeckner G."/>
            <person name="Eichinger L."/>
            <person name="Szafranski K."/>
            <person name="Pachebat J.A."/>
            <person name="Bankier A.T."/>
            <person name="Dear P.H."/>
            <person name="Lehmann R."/>
            <person name="Baumgart C."/>
            <person name="Parra G."/>
            <person name="Abril J.F."/>
            <person name="Guigo R."/>
            <person name="Kumpf K."/>
            <person name="Tunggal B."/>
            <person name="Cox E.C."/>
            <person name="Quail M.A."/>
            <person name="Platzer M."/>
            <person name="Rosenthal A."/>
            <person name="Noegel A.A."/>
        </authorList>
    </citation>
    <scope>NUCLEOTIDE SEQUENCE [LARGE SCALE GENOMIC DNA]</scope>
    <source>
        <strain>AX4</strain>
    </source>
</reference>
<reference key="2">
    <citation type="journal article" date="2005" name="Nature">
        <title>The genome of the social amoeba Dictyostelium discoideum.</title>
        <authorList>
            <person name="Eichinger L."/>
            <person name="Pachebat J.A."/>
            <person name="Gloeckner G."/>
            <person name="Rajandream M.A."/>
            <person name="Sucgang R."/>
            <person name="Berriman M."/>
            <person name="Song J."/>
            <person name="Olsen R."/>
            <person name="Szafranski K."/>
            <person name="Xu Q."/>
            <person name="Tunggal B."/>
            <person name="Kummerfeld S."/>
            <person name="Madera M."/>
            <person name="Konfortov B.A."/>
            <person name="Rivero F."/>
            <person name="Bankier A.T."/>
            <person name="Lehmann R."/>
            <person name="Hamlin N."/>
            <person name="Davies R."/>
            <person name="Gaudet P."/>
            <person name="Fey P."/>
            <person name="Pilcher K."/>
            <person name="Chen G."/>
            <person name="Saunders D."/>
            <person name="Sodergren E.J."/>
            <person name="Davis P."/>
            <person name="Kerhornou A."/>
            <person name="Nie X."/>
            <person name="Hall N."/>
            <person name="Anjard C."/>
            <person name="Hemphill L."/>
            <person name="Bason N."/>
            <person name="Farbrother P."/>
            <person name="Desany B."/>
            <person name="Just E."/>
            <person name="Morio T."/>
            <person name="Rost R."/>
            <person name="Churcher C.M."/>
            <person name="Cooper J."/>
            <person name="Haydock S."/>
            <person name="van Driessche N."/>
            <person name="Cronin A."/>
            <person name="Goodhead I."/>
            <person name="Muzny D.M."/>
            <person name="Mourier T."/>
            <person name="Pain A."/>
            <person name="Lu M."/>
            <person name="Harper D."/>
            <person name="Lindsay R."/>
            <person name="Hauser H."/>
            <person name="James K.D."/>
            <person name="Quiles M."/>
            <person name="Madan Babu M."/>
            <person name="Saito T."/>
            <person name="Buchrieser C."/>
            <person name="Wardroper A."/>
            <person name="Felder M."/>
            <person name="Thangavelu M."/>
            <person name="Johnson D."/>
            <person name="Knights A."/>
            <person name="Loulseged H."/>
            <person name="Mungall K.L."/>
            <person name="Oliver K."/>
            <person name="Price C."/>
            <person name="Quail M.A."/>
            <person name="Urushihara H."/>
            <person name="Hernandez J."/>
            <person name="Rabbinowitsch E."/>
            <person name="Steffen D."/>
            <person name="Sanders M."/>
            <person name="Ma J."/>
            <person name="Kohara Y."/>
            <person name="Sharp S."/>
            <person name="Simmonds M.N."/>
            <person name="Spiegler S."/>
            <person name="Tivey A."/>
            <person name="Sugano S."/>
            <person name="White B."/>
            <person name="Walker D."/>
            <person name="Woodward J.R."/>
            <person name="Winckler T."/>
            <person name="Tanaka Y."/>
            <person name="Shaulsky G."/>
            <person name="Schleicher M."/>
            <person name="Weinstock G.M."/>
            <person name="Rosenthal A."/>
            <person name="Cox E.C."/>
            <person name="Chisholm R.L."/>
            <person name="Gibbs R.A."/>
            <person name="Loomis W.F."/>
            <person name="Platzer M."/>
            <person name="Kay R.R."/>
            <person name="Williams J.G."/>
            <person name="Dear P.H."/>
            <person name="Noegel A.A."/>
            <person name="Barrell B.G."/>
            <person name="Kuspa A."/>
        </authorList>
    </citation>
    <scope>NUCLEOTIDE SEQUENCE [LARGE SCALE GENOMIC DNA]</scope>
    <source>
        <strain>AX4</strain>
    </source>
</reference>
<evidence type="ECO:0000305" key="1"/>
<name>HSL11_DICDI</name>
<organism>
    <name type="scientific">Dictyostelium discoideum</name>
    <name type="common">Social amoeba</name>
    <dbReference type="NCBI Taxonomy" id="44689"/>
    <lineage>
        <taxon>Eukaryota</taxon>
        <taxon>Amoebozoa</taxon>
        <taxon>Evosea</taxon>
        <taxon>Eumycetozoa</taxon>
        <taxon>Dictyostelia</taxon>
        <taxon>Dictyosteliales</taxon>
        <taxon>Dictyosteliaceae</taxon>
        <taxon>Dictyostelium</taxon>
    </lineage>
</organism>